<organism>
    <name type="scientific">Pongo abelii</name>
    <name type="common">Sumatran orangutan</name>
    <name type="synonym">Pongo pygmaeus abelii</name>
    <dbReference type="NCBI Taxonomy" id="9601"/>
    <lineage>
        <taxon>Eukaryota</taxon>
        <taxon>Metazoa</taxon>
        <taxon>Chordata</taxon>
        <taxon>Craniata</taxon>
        <taxon>Vertebrata</taxon>
        <taxon>Euteleostomi</taxon>
        <taxon>Mammalia</taxon>
        <taxon>Eutheria</taxon>
        <taxon>Euarchontoglires</taxon>
        <taxon>Primates</taxon>
        <taxon>Haplorrhini</taxon>
        <taxon>Catarrhini</taxon>
        <taxon>Hominidae</taxon>
        <taxon>Pongo</taxon>
    </lineage>
</organism>
<proteinExistence type="inferred from homology"/>
<evidence type="ECO:0000250" key="1">
    <source>
        <dbReference type="UniProtKB" id="P03897"/>
    </source>
</evidence>
<evidence type="ECO:0000250" key="2">
    <source>
        <dbReference type="UniProtKB" id="P03898"/>
    </source>
</evidence>
<evidence type="ECO:0000255" key="3"/>
<evidence type="ECO:0000305" key="4"/>
<sequence>MNFVLALTVNTLLALLLMTITFWLPQLYPYMEKSDPYECGFDPAYPARIPFSMKFFLVAITFLLFDLEIALLLPLPWALQTTNLPLMTTSSLMLIIILALGLTYEWSQKGLDWAE</sequence>
<name>NU3M_PONAB</name>
<feature type="chain" id="PRO_0000117812" description="NADH-ubiquinone oxidoreductase chain 3">
    <location>
        <begin position="1"/>
        <end position="115"/>
    </location>
</feature>
<feature type="transmembrane region" description="Helical" evidence="3">
    <location>
        <begin position="3"/>
        <end position="23"/>
    </location>
</feature>
<feature type="transmembrane region" description="Helical" evidence="3">
    <location>
        <begin position="55"/>
        <end position="75"/>
    </location>
</feature>
<feature type="transmembrane region" description="Helical" evidence="3">
    <location>
        <begin position="84"/>
        <end position="104"/>
    </location>
</feature>
<comment type="function">
    <text evidence="1">Core subunit of the mitochondrial membrane respiratory chain NADH dehydrogenase (Complex I) which catalyzes electron transfer from NADH through the respiratory chain, using ubiquinone as an electron acceptor. Essential for the catalytic activity of complex I.</text>
</comment>
<comment type="catalytic activity">
    <reaction evidence="1">
        <text>a ubiquinone + NADH + 5 H(+)(in) = a ubiquinol + NAD(+) + 4 H(+)(out)</text>
        <dbReference type="Rhea" id="RHEA:29091"/>
        <dbReference type="Rhea" id="RHEA-COMP:9565"/>
        <dbReference type="Rhea" id="RHEA-COMP:9566"/>
        <dbReference type="ChEBI" id="CHEBI:15378"/>
        <dbReference type="ChEBI" id="CHEBI:16389"/>
        <dbReference type="ChEBI" id="CHEBI:17976"/>
        <dbReference type="ChEBI" id="CHEBI:57540"/>
        <dbReference type="ChEBI" id="CHEBI:57945"/>
        <dbReference type="EC" id="7.1.1.2"/>
    </reaction>
</comment>
<comment type="subunit">
    <text evidence="1">Core subunit of respiratory chain NADH dehydrogenase (Complex I) which is composed of 45 different subunits. Interacts with TMEM186. Interacts with TMEM242 (By similarity).</text>
</comment>
<comment type="subcellular location">
    <subcellularLocation>
        <location evidence="2">Mitochondrion inner membrane</location>
        <topology evidence="3">Multi-pass membrane protein</topology>
    </subcellularLocation>
</comment>
<comment type="similarity">
    <text evidence="4">Belongs to the complex I subunit 3 family.</text>
</comment>
<accession>P92697</accession>
<protein>
    <recommendedName>
        <fullName evidence="1">NADH-ubiquinone oxidoreductase chain 3</fullName>
        <ecNumber evidence="1">7.1.1.2</ecNumber>
    </recommendedName>
    <alternativeName>
        <fullName>NADH dehydrogenase subunit 3</fullName>
    </alternativeName>
</protein>
<gene>
    <name evidence="1" type="primary">MT-ND3</name>
    <name type="synonym">MTND3</name>
    <name type="synonym">NADH3</name>
    <name type="synonym">ND3</name>
</gene>
<geneLocation type="mitochondrion"/>
<keyword id="KW-0249">Electron transport</keyword>
<keyword id="KW-0472">Membrane</keyword>
<keyword id="KW-0496">Mitochondrion</keyword>
<keyword id="KW-0999">Mitochondrion inner membrane</keyword>
<keyword id="KW-0520">NAD</keyword>
<keyword id="KW-1185">Reference proteome</keyword>
<keyword id="KW-0679">Respiratory chain</keyword>
<keyword id="KW-1278">Translocase</keyword>
<keyword id="KW-0812">Transmembrane</keyword>
<keyword id="KW-1133">Transmembrane helix</keyword>
<keyword id="KW-0813">Transport</keyword>
<keyword id="KW-0830">Ubiquinone</keyword>
<reference key="1">
    <citation type="journal article" date="1996" name="J. Mol. Evol.">
        <title>The mitochondrial DNA molecule of Sumatran orangutan and a molecular proposal for two (Bornean and Sumatran) species of orangutan.</title>
        <authorList>
            <person name="Xu X."/>
            <person name="Arnason U."/>
        </authorList>
    </citation>
    <scope>NUCLEOTIDE SEQUENCE [LARGE SCALE GENOMIC DNA]</scope>
</reference>
<dbReference type="EC" id="7.1.1.2" evidence="1"/>
<dbReference type="EMBL" id="X97707">
    <property type="protein sequence ID" value="CAA66290.1"/>
    <property type="molecule type" value="Genomic_DNA"/>
</dbReference>
<dbReference type="RefSeq" id="NP_007842.1">
    <property type="nucleotide sequence ID" value="NC_002083.1"/>
</dbReference>
<dbReference type="SMR" id="P92697"/>
<dbReference type="FunCoup" id="P92697">
    <property type="interactions" value="241"/>
</dbReference>
<dbReference type="STRING" id="9601.ENSPPYP00000023446"/>
<dbReference type="Ensembl" id="ENSPPYT00000024443.2">
    <property type="protein sequence ID" value="ENSPPYP00000023446.2"/>
    <property type="gene ID" value="ENSPPYG00000020964.2"/>
</dbReference>
<dbReference type="GeneID" id="808479"/>
<dbReference type="KEGG" id="pon:808479"/>
<dbReference type="CTD" id="4537"/>
<dbReference type="eggNOG" id="KOG4662">
    <property type="taxonomic scope" value="Eukaryota"/>
</dbReference>
<dbReference type="GeneTree" id="ENSGT00390000011605"/>
<dbReference type="InParanoid" id="P92697"/>
<dbReference type="OMA" id="GPRRYNR"/>
<dbReference type="Proteomes" id="UP000001595">
    <property type="component" value="Mitochondrion"/>
</dbReference>
<dbReference type="GO" id="GO:0005743">
    <property type="term" value="C:mitochondrial inner membrane"/>
    <property type="evidence" value="ECO:0000250"/>
    <property type="project" value="UniProtKB"/>
</dbReference>
<dbReference type="GO" id="GO:0045271">
    <property type="term" value="C:respiratory chain complex I"/>
    <property type="evidence" value="ECO:0007669"/>
    <property type="project" value="Ensembl"/>
</dbReference>
<dbReference type="GO" id="GO:0008137">
    <property type="term" value="F:NADH dehydrogenase (ubiquinone) activity"/>
    <property type="evidence" value="ECO:0000250"/>
    <property type="project" value="UniProtKB"/>
</dbReference>
<dbReference type="GO" id="GO:0006120">
    <property type="term" value="P:mitochondrial electron transport, NADH to ubiquinone"/>
    <property type="evidence" value="ECO:0000250"/>
    <property type="project" value="UniProtKB"/>
</dbReference>
<dbReference type="FunFam" id="1.20.58.1610:FF:000004">
    <property type="entry name" value="NADH-quinone oxidoreductase subunit A"/>
    <property type="match status" value="1"/>
</dbReference>
<dbReference type="Gene3D" id="1.20.58.1610">
    <property type="entry name" value="NADH:ubiquinone/plastoquinone oxidoreductase, chain 3"/>
    <property type="match status" value="1"/>
</dbReference>
<dbReference type="InterPro" id="IPR000440">
    <property type="entry name" value="NADH_UbQ/plastoQ_OxRdtase_su3"/>
</dbReference>
<dbReference type="InterPro" id="IPR038430">
    <property type="entry name" value="NDAH_ubi_oxred_su3_sf"/>
</dbReference>
<dbReference type="PANTHER" id="PTHR11058">
    <property type="entry name" value="NADH-UBIQUINONE OXIDOREDUCTASE CHAIN 3"/>
    <property type="match status" value="1"/>
</dbReference>
<dbReference type="PANTHER" id="PTHR11058:SF9">
    <property type="entry name" value="NADH-UBIQUINONE OXIDOREDUCTASE CHAIN 3"/>
    <property type="match status" value="1"/>
</dbReference>
<dbReference type="Pfam" id="PF00507">
    <property type="entry name" value="Oxidored_q4"/>
    <property type="match status" value="1"/>
</dbReference>